<proteinExistence type="inferred from homology"/>
<evidence type="ECO:0000255" key="1">
    <source>
        <dbReference type="HAMAP-Rule" id="MF_01365"/>
    </source>
</evidence>
<evidence type="ECO:0000305" key="2"/>
<gene>
    <name evidence="1" type="primary">rplF</name>
    <name type="ordered locus">PFL_5567</name>
</gene>
<dbReference type="EMBL" id="CP000076">
    <property type="protein sequence ID" value="AAY94772.1"/>
    <property type="molecule type" value="Genomic_DNA"/>
</dbReference>
<dbReference type="RefSeq" id="WP_007924185.1">
    <property type="nucleotide sequence ID" value="NC_004129.6"/>
</dbReference>
<dbReference type="SMR" id="Q4K548"/>
<dbReference type="STRING" id="220664.PFL_5567"/>
<dbReference type="GeneID" id="93406133"/>
<dbReference type="KEGG" id="pfl:PFL_5567"/>
<dbReference type="eggNOG" id="COG0097">
    <property type="taxonomic scope" value="Bacteria"/>
</dbReference>
<dbReference type="HOGENOM" id="CLU_065464_1_2_6"/>
<dbReference type="Proteomes" id="UP000008540">
    <property type="component" value="Chromosome"/>
</dbReference>
<dbReference type="GO" id="GO:0022625">
    <property type="term" value="C:cytosolic large ribosomal subunit"/>
    <property type="evidence" value="ECO:0007669"/>
    <property type="project" value="TreeGrafter"/>
</dbReference>
<dbReference type="GO" id="GO:0019843">
    <property type="term" value="F:rRNA binding"/>
    <property type="evidence" value="ECO:0007669"/>
    <property type="project" value="UniProtKB-UniRule"/>
</dbReference>
<dbReference type="GO" id="GO:0003735">
    <property type="term" value="F:structural constituent of ribosome"/>
    <property type="evidence" value="ECO:0007669"/>
    <property type="project" value="InterPro"/>
</dbReference>
<dbReference type="GO" id="GO:0002181">
    <property type="term" value="P:cytoplasmic translation"/>
    <property type="evidence" value="ECO:0007669"/>
    <property type="project" value="TreeGrafter"/>
</dbReference>
<dbReference type="FunFam" id="3.90.930.12:FF:000001">
    <property type="entry name" value="50S ribosomal protein L6"/>
    <property type="match status" value="1"/>
</dbReference>
<dbReference type="FunFam" id="3.90.930.12:FF:000002">
    <property type="entry name" value="50S ribosomal protein L6"/>
    <property type="match status" value="1"/>
</dbReference>
<dbReference type="Gene3D" id="3.90.930.12">
    <property type="entry name" value="Ribosomal protein L6, alpha-beta domain"/>
    <property type="match status" value="2"/>
</dbReference>
<dbReference type="HAMAP" id="MF_01365_B">
    <property type="entry name" value="Ribosomal_uL6_B"/>
    <property type="match status" value="1"/>
</dbReference>
<dbReference type="InterPro" id="IPR000702">
    <property type="entry name" value="Ribosomal_uL6-like"/>
</dbReference>
<dbReference type="InterPro" id="IPR036789">
    <property type="entry name" value="Ribosomal_uL6-like_a/b-dom_sf"/>
</dbReference>
<dbReference type="InterPro" id="IPR020040">
    <property type="entry name" value="Ribosomal_uL6_a/b-dom"/>
</dbReference>
<dbReference type="InterPro" id="IPR019906">
    <property type="entry name" value="Ribosomal_uL6_bac-type"/>
</dbReference>
<dbReference type="InterPro" id="IPR002358">
    <property type="entry name" value="Ribosomal_uL6_CS"/>
</dbReference>
<dbReference type="NCBIfam" id="TIGR03654">
    <property type="entry name" value="L6_bact"/>
    <property type="match status" value="1"/>
</dbReference>
<dbReference type="PANTHER" id="PTHR11655">
    <property type="entry name" value="60S/50S RIBOSOMAL PROTEIN L6/L9"/>
    <property type="match status" value="1"/>
</dbReference>
<dbReference type="PANTHER" id="PTHR11655:SF14">
    <property type="entry name" value="LARGE RIBOSOMAL SUBUNIT PROTEIN UL6M"/>
    <property type="match status" value="1"/>
</dbReference>
<dbReference type="Pfam" id="PF00347">
    <property type="entry name" value="Ribosomal_L6"/>
    <property type="match status" value="2"/>
</dbReference>
<dbReference type="PIRSF" id="PIRSF002162">
    <property type="entry name" value="Ribosomal_L6"/>
    <property type="match status" value="1"/>
</dbReference>
<dbReference type="PRINTS" id="PR00059">
    <property type="entry name" value="RIBOSOMALL6"/>
</dbReference>
<dbReference type="SUPFAM" id="SSF56053">
    <property type="entry name" value="Ribosomal protein L6"/>
    <property type="match status" value="2"/>
</dbReference>
<dbReference type="PROSITE" id="PS00525">
    <property type="entry name" value="RIBOSOMAL_L6_1"/>
    <property type="match status" value="1"/>
</dbReference>
<reference key="1">
    <citation type="journal article" date="2005" name="Nat. Biotechnol.">
        <title>Complete genome sequence of the plant commensal Pseudomonas fluorescens Pf-5.</title>
        <authorList>
            <person name="Paulsen I.T."/>
            <person name="Press C.M."/>
            <person name="Ravel J."/>
            <person name="Kobayashi D.Y."/>
            <person name="Myers G.S.A."/>
            <person name="Mavrodi D.V."/>
            <person name="DeBoy R.T."/>
            <person name="Seshadri R."/>
            <person name="Ren Q."/>
            <person name="Madupu R."/>
            <person name="Dodson R.J."/>
            <person name="Durkin A.S."/>
            <person name="Brinkac L.M."/>
            <person name="Daugherty S.C."/>
            <person name="Sullivan S.A."/>
            <person name="Rosovitz M.J."/>
            <person name="Gwinn M.L."/>
            <person name="Zhou L."/>
            <person name="Schneider D.J."/>
            <person name="Cartinhour S.W."/>
            <person name="Nelson W.C."/>
            <person name="Weidman J."/>
            <person name="Watkins K."/>
            <person name="Tran K."/>
            <person name="Khouri H."/>
            <person name="Pierson E.A."/>
            <person name="Pierson L.S. III"/>
            <person name="Thomashow L.S."/>
            <person name="Loper J.E."/>
        </authorList>
    </citation>
    <scope>NUCLEOTIDE SEQUENCE [LARGE SCALE GENOMIC DNA]</scope>
    <source>
        <strain>ATCC BAA-477 / NRRL B-23932 / Pf-5</strain>
    </source>
</reference>
<sequence length="177" mass="19182">MSRVAKNPVKLPAGVEVKFAGQQLSVKGAKGTLELNVHSSVEIVQEAGELRFAARNGDQQTRAMAGTTRALVNNMVQGVSQGFERKLQLVGVGYKAQAKGTVLNLALGFSHPVDYELPEGITAETPSQTDILIKGIDKQLVGQVAAEIRDFRPPEPYKGKGVRYADEVVRRKEAKKK</sequence>
<accession>Q4K548</accession>
<organism>
    <name type="scientific">Pseudomonas fluorescens (strain ATCC BAA-477 / NRRL B-23932 / Pf-5)</name>
    <dbReference type="NCBI Taxonomy" id="220664"/>
    <lineage>
        <taxon>Bacteria</taxon>
        <taxon>Pseudomonadati</taxon>
        <taxon>Pseudomonadota</taxon>
        <taxon>Gammaproteobacteria</taxon>
        <taxon>Pseudomonadales</taxon>
        <taxon>Pseudomonadaceae</taxon>
        <taxon>Pseudomonas</taxon>
    </lineage>
</organism>
<protein>
    <recommendedName>
        <fullName evidence="1">Large ribosomal subunit protein uL6</fullName>
    </recommendedName>
    <alternativeName>
        <fullName evidence="2">50S ribosomal protein L6</fullName>
    </alternativeName>
</protein>
<comment type="function">
    <text evidence="1">This protein binds to the 23S rRNA, and is important in its secondary structure. It is located near the subunit interface in the base of the L7/L12 stalk, and near the tRNA binding site of the peptidyltransferase center.</text>
</comment>
<comment type="subunit">
    <text evidence="1">Part of the 50S ribosomal subunit.</text>
</comment>
<comment type="similarity">
    <text evidence="1">Belongs to the universal ribosomal protein uL6 family.</text>
</comment>
<feature type="chain" id="PRO_0000260920" description="Large ribosomal subunit protein uL6">
    <location>
        <begin position="1"/>
        <end position="177"/>
    </location>
</feature>
<keyword id="KW-0687">Ribonucleoprotein</keyword>
<keyword id="KW-0689">Ribosomal protein</keyword>
<keyword id="KW-0694">RNA-binding</keyword>
<keyword id="KW-0699">rRNA-binding</keyword>
<name>RL6_PSEF5</name>